<accession>Q9CUU3</accession>
<accession>A2AJW2</accession>
<accession>Q1G7B6</accession>
<evidence type="ECO:0000250" key="1">
    <source>
        <dbReference type="UniProtKB" id="O70608"/>
    </source>
</evidence>
<evidence type="ECO:0000255" key="2"/>
<evidence type="ECO:0000256" key="3">
    <source>
        <dbReference type="SAM" id="MobiDB-lite"/>
    </source>
</evidence>
<evidence type="ECO:0000269" key="4">
    <source>
    </source>
</evidence>
<evidence type="ECO:0000269" key="5">
    <source>
    </source>
</evidence>
<evidence type="ECO:0000269" key="6">
    <source>
    </source>
</evidence>
<evidence type="ECO:0000269" key="7">
    <source>
    </source>
</evidence>
<evidence type="ECO:0000305" key="8"/>
<evidence type="ECO:0007744" key="9">
    <source>
    </source>
</evidence>
<evidence type="ECO:0007829" key="10">
    <source>
        <dbReference type="PDB" id="5IWZ"/>
    </source>
</evidence>
<sequence length="1500" mass="172123">MPVRPDLQQLEKCIDDALRKNDFKPLLALLQIDICEDVKIKCSKQFLRKLDDLICRELNKKDIQTVSSILISIGRCSKNIFILGQAGLQTMIKQGLVQKMVSWFENSKEIILNQQQSKDEAVMNMIEDLFDLLMVIYDISDEGKNQVLESFIPQICALVIDSRVNFCIQQEALKKMNLMLDRIPQDANKILSNQEMLTLMSNMGERILDVGDYELQVGIVEALCRMTTEKRRQELAYEWFSMDFIANAFKEIKDCEFETDCRIFLNLVNGILGDKRRVYTFPCLSAFLGKYELQIPSDEKLEEFWIDFNLGSHTLSFYIAGDEEDHQWEAVTVPEEKVQMYNIEVRESKKLLTLTLKNIVKISKKEGKELLFYFDESLEITNVTKKVFGGNKYKEFTRKQGISVAKTSIHVLFDASGSQILVPESQPSPVKENLIHLKEKSDIQKKLVNPLELGNSSSQDEITTPSRKKMSEASMIVPDTDRYTVRSPILLINTSTPRRSREPLQAINSVEKAVSKTSESGMDYAASPKSRQSDGRKRWNNRANHNKTTAVIQNKQYEDNESPDQNFNEIEDTLSNVSSAVGKVDKPVLPGVLDISKNTTHSRWACWTPVTTIKLCNNQRSRALPGDTCTQDTGVNKKCTKQKSVSDDDSEETQKGKYSKDVIKCNKSDEAEFCERNIQEQNHPKYSQKKNTANAKKSDWHIESETTYKSVLLNKTTEESLIYKKTCVLSKDVNTTICDKSPSRKSKRNHTKSRKELMSELTSCELEEIPVRENSKGKRFTGASESLINQISRRYNPSDSMMSTRKLKEPQDGSGFSKKPDLQFNKVQRKSYRKLKATVVNVTSECPLDDVYNFSLNGADEPVIKLGIQEFQATTREASMDNSLKLVKNHDEHDPFLKTKDKRMLSYEKKTLLSDTETECGCDDSKTDISWLKEPKTKRLMDYSRNKNTTKYKSRKSRSSMEKGQPRPTMVLNKNSMKNDYEVVVDGRTRLPRRATKTKKNYKDLSTSESESESEKECSYLFKDKLPTKEETIHSRAQTKKLPEKQQKVFNSEALKGQPSEEQKNSSRLREGREDSLCLSSASVSRSSSSVEVMRCTEKITERDFTQDYDYITKSLSPYPKAPSPEFLNGNNSVVGRGQSPRISETSAMCVRKSYSPASGPPFSPRHTPTKNNSVVNMKKANSVINNQRTQHCNSYSDVSSNSSEKLYMEPESPESCDNHMQNKREGNHAASPLSLSSEKIEKMWFDMPSENTHVSGPSQRGSKRRMYLEDDELSNSNEAEVEEAEEREHLLSKKRCQWENSDQHTFKTSLSTPDFSVPKDWQQELQGAGMFYDNISSDYKRKTDSQHKIMDDFTTKTLKLTQQHLMAMTSQAQGRRDENVEKFQVTLLDELEKVEKDSQTLRDLEKELVDIEEKLVQKMRAYHRCERERFRVLKTSLDKSFLVYNSVYEESVFTSEMCLMKANMKMLQDKLLKEMHEEEVLNIRRGLQSLFKAHEGNDA</sequence>
<name>SYCP2_MOUSE</name>
<feature type="chain" id="PRO_0000072367" description="Synaptonemal complex protein 2">
    <location>
        <begin position="1"/>
        <end position="1500"/>
    </location>
</feature>
<feature type="region of interest" description="Disordered" evidence="3">
    <location>
        <begin position="512"/>
        <end position="548"/>
    </location>
</feature>
<feature type="region of interest" description="Disordered" evidence="3">
    <location>
        <begin position="796"/>
        <end position="820"/>
    </location>
</feature>
<feature type="region of interest" description="Disordered" evidence="3">
    <location>
        <begin position="940"/>
        <end position="1010"/>
    </location>
</feature>
<feature type="region of interest" description="Disordered" evidence="3">
    <location>
        <begin position="1029"/>
        <end position="1084"/>
    </location>
</feature>
<feature type="region of interest" description="Disordered" evidence="3">
    <location>
        <begin position="1208"/>
        <end position="1234"/>
    </location>
</feature>
<feature type="coiled-coil region" evidence="2">
    <location>
        <begin position="1388"/>
        <end position="1429"/>
    </location>
</feature>
<feature type="compositionally biased region" description="Basic residues" evidence="3">
    <location>
        <begin position="948"/>
        <end position="958"/>
    </location>
</feature>
<feature type="compositionally biased region" description="Basic and acidic residues" evidence="3">
    <location>
        <begin position="977"/>
        <end position="989"/>
    </location>
</feature>
<feature type="compositionally biased region" description="Basic residues" evidence="3">
    <location>
        <begin position="990"/>
        <end position="1000"/>
    </location>
</feature>
<feature type="compositionally biased region" description="Basic and acidic residues" evidence="3">
    <location>
        <begin position="1059"/>
        <end position="1076"/>
    </location>
</feature>
<feature type="compositionally biased region" description="Basic and acidic residues" evidence="3">
    <location>
        <begin position="1217"/>
        <end position="1228"/>
    </location>
</feature>
<feature type="modified residue" description="Phosphoserine" evidence="9">
    <location>
        <position position="457"/>
    </location>
</feature>
<feature type="modified residue" description="Phosphoserine" evidence="9">
    <location>
        <position position="458"/>
    </location>
</feature>
<feature type="modified residue" description="Phosphothreonine" evidence="9">
    <location>
        <position position="464"/>
    </location>
</feature>
<feature type="modified residue" description="Phosphoserine" evidence="9">
    <location>
        <position position="487"/>
    </location>
</feature>
<feature type="modified residue" description="Phosphothreonine" evidence="9">
    <location>
        <position position="496"/>
    </location>
</feature>
<feature type="modified residue" description="Phosphoserine" evidence="9">
    <location>
        <position position="500"/>
    </location>
</feature>
<feature type="modified residue" description="Phosphoserine" evidence="9">
    <location>
        <position position="509"/>
    </location>
</feature>
<feature type="modified residue" description="Phosphoserine" evidence="9">
    <location>
        <position position="518"/>
    </location>
</feature>
<feature type="modified residue" description="Phosphoserine" evidence="9">
    <location>
        <position position="527"/>
    </location>
</feature>
<feature type="modified residue" description="Phosphothreonine" evidence="9">
    <location>
        <position position="608"/>
    </location>
</feature>
<feature type="modified residue" description="Phosphothreonine" evidence="9">
    <location>
        <position position="633"/>
    </location>
</feature>
<feature type="modified residue" description="Phosphoserine" evidence="1">
    <location>
        <position position="646"/>
    </location>
</feature>
<feature type="modified residue" description="Phosphoserine" evidence="9">
    <location>
        <position position="650"/>
    </location>
</feature>
<feature type="modified residue" description="Phosphoserine" evidence="9">
    <location>
        <position position="741"/>
    </location>
</feature>
<feature type="modified residue" description="Phosphoserine" evidence="9">
    <location>
        <position position="914"/>
    </location>
</feature>
<feature type="modified residue" description="Phosphothreonine" evidence="9">
    <location>
        <position position="916"/>
    </location>
</feature>
<feature type="modified residue" description="Phosphoserine" evidence="9">
    <location>
        <position position="1115"/>
    </location>
</feature>
<feature type="modified residue" description="Phosphoserine" evidence="9">
    <location>
        <position position="1117"/>
    </location>
</feature>
<feature type="modified residue" description="Phosphoserine" evidence="9">
    <location>
        <position position="1124"/>
    </location>
</feature>
<feature type="modified residue" description="Phosphoserine" evidence="9">
    <location>
        <position position="1133"/>
    </location>
</feature>
<feature type="modified residue" description="Phosphoserine" evidence="9">
    <location>
        <position position="1140"/>
    </location>
</feature>
<feature type="modified residue" description="Phosphoserine" evidence="9">
    <location>
        <position position="1144"/>
    </location>
</feature>
<feature type="modified residue" description="Phosphoserine" evidence="9">
    <location>
        <position position="1156"/>
    </location>
</feature>
<feature type="modified residue" description="Phosphoserine" evidence="9">
    <location>
        <position position="1159"/>
    </location>
</feature>
<feature type="modified residue" description="Phosphoserine" evidence="9">
    <location>
        <position position="1164"/>
    </location>
</feature>
<feature type="modified residue" description="Phosphothreonine" evidence="9">
    <location>
        <position position="1168"/>
    </location>
</feature>
<feature type="modified residue" description="Phosphoserine" evidence="9">
    <location>
        <position position="1183"/>
    </location>
</feature>
<feature type="modified residue" description="Phosphoserine" evidence="1">
    <location>
        <position position="1213"/>
    </location>
</feature>
<feature type="modified residue" description="Phosphoserine" evidence="1">
    <location>
        <position position="1216"/>
    </location>
</feature>
<feature type="modified residue" description="Phosphoserine" evidence="1">
    <location>
        <position position="1232"/>
    </location>
</feature>
<feature type="modified residue" description="Phosphoserine" evidence="9">
    <location>
        <position position="1275"/>
    </location>
</feature>
<feature type="modified residue" description="Phosphoserine" evidence="9">
    <location>
        <position position="1277"/>
    </location>
</feature>
<feature type="modified residue" description="Phosphothreonine" evidence="9">
    <location>
        <position position="1313"/>
    </location>
</feature>
<feature type="helix" evidence="10">
    <location>
        <begin position="7"/>
        <end position="9"/>
    </location>
</feature>
<feature type="helix" evidence="10">
    <location>
        <begin position="10"/>
        <end position="20"/>
    </location>
</feature>
<feature type="helix" evidence="10">
    <location>
        <begin position="24"/>
        <end position="29"/>
    </location>
</feature>
<feature type="strand" evidence="10">
    <location>
        <begin position="40"/>
        <end position="42"/>
    </location>
</feature>
<feature type="helix" evidence="10">
    <location>
        <begin position="46"/>
        <end position="60"/>
    </location>
</feature>
<feature type="helix" evidence="10">
    <location>
        <begin position="63"/>
        <end position="76"/>
    </location>
</feature>
<feature type="helix" evidence="10">
    <location>
        <begin position="77"/>
        <end position="79"/>
    </location>
</feature>
<feature type="strand" evidence="10">
    <location>
        <begin position="80"/>
        <end position="82"/>
    </location>
</feature>
<feature type="helix" evidence="10">
    <location>
        <begin position="87"/>
        <end position="94"/>
    </location>
</feature>
<feature type="helix" evidence="10">
    <location>
        <begin position="96"/>
        <end position="105"/>
    </location>
</feature>
<feature type="helix" evidence="10">
    <location>
        <begin position="108"/>
        <end position="112"/>
    </location>
</feature>
<feature type="helix" evidence="10">
    <location>
        <begin position="120"/>
        <end position="138"/>
    </location>
</feature>
<feature type="helix" evidence="10">
    <location>
        <begin position="141"/>
        <end position="160"/>
    </location>
</feature>
<feature type="helix" evidence="10">
    <location>
        <begin position="166"/>
        <end position="182"/>
    </location>
</feature>
<feature type="helix" evidence="10">
    <location>
        <begin position="194"/>
        <end position="209"/>
    </location>
</feature>
<feature type="helix" evidence="10">
    <location>
        <begin position="213"/>
        <end position="226"/>
    </location>
</feature>
<feature type="helix" evidence="10">
    <location>
        <begin position="229"/>
        <end position="239"/>
    </location>
</feature>
<feature type="helix" evidence="10">
    <location>
        <begin position="243"/>
        <end position="250"/>
    </location>
</feature>
<feature type="helix" evidence="10">
    <location>
        <begin position="254"/>
        <end position="256"/>
    </location>
</feature>
<feature type="helix" evidence="10">
    <location>
        <begin position="257"/>
        <end position="271"/>
    </location>
</feature>
<feature type="helix" evidence="10">
    <location>
        <begin position="273"/>
        <end position="275"/>
    </location>
</feature>
<feature type="strand" evidence="10">
    <location>
        <begin position="277"/>
        <end position="282"/>
    </location>
</feature>
<feature type="strand" evidence="10">
    <location>
        <begin position="284"/>
        <end position="288"/>
    </location>
</feature>
<feature type="strand" evidence="10">
    <location>
        <begin position="305"/>
        <end position="309"/>
    </location>
</feature>
<feature type="turn" evidence="10">
    <location>
        <begin position="310"/>
        <end position="313"/>
    </location>
</feature>
<feature type="strand" evidence="10">
    <location>
        <begin position="314"/>
        <end position="318"/>
    </location>
</feature>
<feature type="strand" evidence="10">
    <location>
        <begin position="330"/>
        <end position="334"/>
    </location>
</feature>
<feature type="helix" evidence="10">
    <location>
        <begin position="335"/>
        <end position="337"/>
    </location>
</feature>
<feature type="strand" evidence="10">
    <location>
        <begin position="338"/>
        <end position="346"/>
    </location>
</feature>
<feature type="strand" evidence="10">
    <location>
        <begin position="349"/>
        <end position="362"/>
    </location>
</feature>
<feature type="strand" evidence="10">
    <location>
        <begin position="365"/>
        <end position="375"/>
    </location>
</feature>
<feature type="helix" evidence="10">
    <location>
        <begin position="380"/>
        <end position="387"/>
    </location>
</feature>
<proteinExistence type="evidence at protein level"/>
<reference key="1">
    <citation type="journal article" date="2006" name="J. Cell Biol.">
        <title>Mouse SYCP2 is required for synaptonemal complex assembly and chromosomal synapsis during male meiosis.</title>
        <authorList>
            <person name="Yang F."/>
            <person name="De La Fuente R."/>
            <person name="Leu N.A."/>
            <person name="Baumann C."/>
            <person name="McLaughlin K.J."/>
            <person name="Wang P.J."/>
        </authorList>
    </citation>
    <scope>NUCLEOTIDE SEQUENCE [MRNA]</scope>
    <scope>FUNCTION</scope>
    <scope>SUBUNIT</scope>
    <scope>DISRUPTION PHENOTYPE</scope>
    <scope>INTERACTION WITH SYCP3</scope>
    <scope>SUBCELLULAR LOCATION</scope>
    <scope>TISSUE SPECIFICITY</scope>
</reference>
<reference key="2">
    <citation type="journal article" date="2009" name="PLoS Biol.">
        <title>Lineage-specific biology revealed by a finished genome assembly of the mouse.</title>
        <authorList>
            <person name="Church D.M."/>
            <person name="Goodstadt L."/>
            <person name="Hillier L.W."/>
            <person name="Zody M.C."/>
            <person name="Goldstein S."/>
            <person name="She X."/>
            <person name="Bult C.J."/>
            <person name="Agarwala R."/>
            <person name="Cherry J.L."/>
            <person name="DiCuccio M."/>
            <person name="Hlavina W."/>
            <person name="Kapustin Y."/>
            <person name="Meric P."/>
            <person name="Maglott D."/>
            <person name="Birtle Z."/>
            <person name="Marques A.C."/>
            <person name="Graves T."/>
            <person name="Zhou S."/>
            <person name="Teague B."/>
            <person name="Potamousis K."/>
            <person name="Churas C."/>
            <person name="Place M."/>
            <person name="Herschleb J."/>
            <person name="Runnheim R."/>
            <person name="Forrest D."/>
            <person name="Amos-Landgraf J."/>
            <person name="Schwartz D.C."/>
            <person name="Cheng Z."/>
            <person name="Lindblad-Toh K."/>
            <person name="Eichler E.E."/>
            <person name="Ponting C.P."/>
        </authorList>
    </citation>
    <scope>NUCLEOTIDE SEQUENCE [LARGE SCALE GENOMIC DNA]</scope>
    <source>
        <strain>C57BL/6J</strain>
    </source>
</reference>
<reference key="3">
    <citation type="journal article" date="2005" name="Science">
        <title>The transcriptional landscape of the mammalian genome.</title>
        <authorList>
            <person name="Carninci P."/>
            <person name="Kasukawa T."/>
            <person name="Katayama S."/>
            <person name="Gough J."/>
            <person name="Frith M.C."/>
            <person name="Maeda N."/>
            <person name="Oyama R."/>
            <person name="Ravasi T."/>
            <person name="Lenhard B."/>
            <person name="Wells C."/>
            <person name="Kodzius R."/>
            <person name="Shimokawa K."/>
            <person name="Bajic V.B."/>
            <person name="Brenner S.E."/>
            <person name="Batalov S."/>
            <person name="Forrest A.R."/>
            <person name="Zavolan M."/>
            <person name="Davis M.J."/>
            <person name="Wilming L.G."/>
            <person name="Aidinis V."/>
            <person name="Allen J.E."/>
            <person name="Ambesi-Impiombato A."/>
            <person name="Apweiler R."/>
            <person name="Aturaliya R.N."/>
            <person name="Bailey T.L."/>
            <person name="Bansal M."/>
            <person name="Baxter L."/>
            <person name="Beisel K.W."/>
            <person name="Bersano T."/>
            <person name="Bono H."/>
            <person name="Chalk A.M."/>
            <person name="Chiu K.P."/>
            <person name="Choudhary V."/>
            <person name="Christoffels A."/>
            <person name="Clutterbuck D.R."/>
            <person name="Crowe M.L."/>
            <person name="Dalla E."/>
            <person name="Dalrymple B.P."/>
            <person name="de Bono B."/>
            <person name="Della Gatta G."/>
            <person name="di Bernardo D."/>
            <person name="Down T."/>
            <person name="Engstrom P."/>
            <person name="Fagiolini M."/>
            <person name="Faulkner G."/>
            <person name="Fletcher C.F."/>
            <person name="Fukushima T."/>
            <person name="Furuno M."/>
            <person name="Futaki S."/>
            <person name="Gariboldi M."/>
            <person name="Georgii-Hemming P."/>
            <person name="Gingeras T.R."/>
            <person name="Gojobori T."/>
            <person name="Green R.E."/>
            <person name="Gustincich S."/>
            <person name="Harbers M."/>
            <person name="Hayashi Y."/>
            <person name="Hensch T.K."/>
            <person name="Hirokawa N."/>
            <person name="Hill D."/>
            <person name="Huminiecki L."/>
            <person name="Iacono M."/>
            <person name="Ikeo K."/>
            <person name="Iwama A."/>
            <person name="Ishikawa T."/>
            <person name="Jakt M."/>
            <person name="Kanapin A."/>
            <person name="Katoh M."/>
            <person name="Kawasawa Y."/>
            <person name="Kelso J."/>
            <person name="Kitamura H."/>
            <person name="Kitano H."/>
            <person name="Kollias G."/>
            <person name="Krishnan S.P."/>
            <person name="Kruger A."/>
            <person name="Kummerfeld S.K."/>
            <person name="Kurochkin I.V."/>
            <person name="Lareau L.F."/>
            <person name="Lazarevic D."/>
            <person name="Lipovich L."/>
            <person name="Liu J."/>
            <person name="Liuni S."/>
            <person name="McWilliam S."/>
            <person name="Madan Babu M."/>
            <person name="Madera M."/>
            <person name="Marchionni L."/>
            <person name="Matsuda H."/>
            <person name="Matsuzawa S."/>
            <person name="Miki H."/>
            <person name="Mignone F."/>
            <person name="Miyake S."/>
            <person name="Morris K."/>
            <person name="Mottagui-Tabar S."/>
            <person name="Mulder N."/>
            <person name="Nakano N."/>
            <person name="Nakauchi H."/>
            <person name="Ng P."/>
            <person name="Nilsson R."/>
            <person name="Nishiguchi S."/>
            <person name="Nishikawa S."/>
            <person name="Nori F."/>
            <person name="Ohara O."/>
            <person name="Okazaki Y."/>
            <person name="Orlando V."/>
            <person name="Pang K.C."/>
            <person name="Pavan W.J."/>
            <person name="Pavesi G."/>
            <person name="Pesole G."/>
            <person name="Petrovsky N."/>
            <person name="Piazza S."/>
            <person name="Reed J."/>
            <person name="Reid J.F."/>
            <person name="Ring B.Z."/>
            <person name="Ringwald M."/>
            <person name="Rost B."/>
            <person name="Ruan Y."/>
            <person name="Salzberg S.L."/>
            <person name="Sandelin A."/>
            <person name="Schneider C."/>
            <person name="Schoenbach C."/>
            <person name="Sekiguchi K."/>
            <person name="Semple C.A."/>
            <person name="Seno S."/>
            <person name="Sessa L."/>
            <person name="Sheng Y."/>
            <person name="Shibata Y."/>
            <person name="Shimada H."/>
            <person name="Shimada K."/>
            <person name="Silva D."/>
            <person name="Sinclair B."/>
            <person name="Sperling S."/>
            <person name="Stupka E."/>
            <person name="Sugiura K."/>
            <person name="Sultana R."/>
            <person name="Takenaka Y."/>
            <person name="Taki K."/>
            <person name="Tammoja K."/>
            <person name="Tan S.L."/>
            <person name="Tang S."/>
            <person name="Taylor M.S."/>
            <person name="Tegner J."/>
            <person name="Teichmann S.A."/>
            <person name="Ueda H.R."/>
            <person name="van Nimwegen E."/>
            <person name="Verardo R."/>
            <person name="Wei C.L."/>
            <person name="Yagi K."/>
            <person name="Yamanishi H."/>
            <person name="Zabarovsky E."/>
            <person name="Zhu S."/>
            <person name="Zimmer A."/>
            <person name="Hide W."/>
            <person name="Bult C."/>
            <person name="Grimmond S.M."/>
            <person name="Teasdale R.D."/>
            <person name="Liu E.T."/>
            <person name="Brusic V."/>
            <person name="Quackenbush J."/>
            <person name="Wahlestedt C."/>
            <person name="Mattick J.S."/>
            <person name="Hume D.A."/>
            <person name="Kai C."/>
            <person name="Sasaki D."/>
            <person name="Tomaru Y."/>
            <person name="Fukuda S."/>
            <person name="Kanamori-Katayama M."/>
            <person name="Suzuki M."/>
            <person name="Aoki J."/>
            <person name="Arakawa T."/>
            <person name="Iida J."/>
            <person name="Imamura K."/>
            <person name="Itoh M."/>
            <person name="Kato T."/>
            <person name="Kawaji H."/>
            <person name="Kawagashira N."/>
            <person name="Kawashima T."/>
            <person name="Kojima M."/>
            <person name="Kondo S."/>
            <person name="Konno H."/>
            <person name="Nakano K."/>
            <person name="Ninomiya N."/>
            <person name="Nishio T."/>
            <person name="Okada M."/>
            <person name="Plessy C."/>
            <person name="Shibata K."/>
            <person name="Shiraki T."/>
            <person name="Suzuki S."/>
            <person name="Tagami M."/>
            <person name="Waki K."/>
            <person name="Watahiki A."/>
            <person name="Okamura-Oho Y."/>
            <person name="Suzuki H."/>
            <person name="Kawai J."/>
            <person name="Hayashizaki Y."/>
        </authorList>
    </citation>
    <scope>NUCLEOTIDE SEQUENCE [LARGE SCALE MRNA] OF 1-544</scope>
    <source>
        <strain>C57BL/6J</strain>
        <tissue>Placenta</tissue>
    </source>
</reference>
<reference key="4">
    <citation type="journal article" date="2001" name="Mol. Cell. Biol.">
        <title>A meiotic chromosomal core consisting of cohesin complex proteins recruits DNA recombination proteins and promotes synapsis in the absence of an axial element in mammalian meiotic cells.</title>
        <authorList>
            <person name="Pelttari J."/>
            <person name="Hoja M.-R."/>
            <person name="Yuan L."/>
            <person name="Liu J.-G."/>
            <person name="Brundell E."/>
            <person name="Moens P."/>
            <person name="Santucci-Darmanin S."/>
            <person name="Jessberger R."/>
            <person name="Barbero J.L."/>
            <person name="Heyting C."/>
            <person name="Hoeoeg C."/>
        </authorList>
    </citation>
    <scope>FUNCTION</scope>
</reference>
<reference key="5">
    <citation type="journal article" date="2008" name="Genes Dev.">
        <title>Meiotic failure in male mice lacking an X-linked factor.</title>
        <authorList>
            <person name="Yang F."/>
            <person name="Gell K."/>
            <person name="van der Heijden G.W."/>
            <person name="Eckardt S."/>
            <person name="Leu N.A."/>
            <person name="Page D.C."/>
            <person name="Benavente R."/>
            <person name="Her C."/>
            <person name="Hoog C."/>
            <person name="McLaughlin K.J."/>
            <person name="Wang P.J."/>
        </authorList>
    </citation>
    <scope>INTERACTION WITH TEX11</scope>
</reference>
<reference key="6">
    <citation type="journal article" date="2010" name="Cell">
        <title>A tissue-specific atlas of mouse protein phosphorylation and expression.</title>
        <authorList>
            <person name="Huttlin E.L."/>
            <person name="Jedrychowski M.P."/>
            <person name="Elias J.E."/>
            <person name="Goswami T."/>
            <person name="Rad R."/>
            <person name="Beausoleil S.A."/>
            <person name="Villen J."/>
            <person name="Haas W."/>
            <person name="Sowa M.E."/>
            <person name="Gygi S.P."/>
        </authorList>
    </citation>
    <scope>PHOSPHORYLATION [LARGE SCALE ANALYSIS] AT SER-457; SER-458; THR-464; SER-487; THR-496; SER-500; SER-509; SER-518; SER-527; THR-608; THR-633; SER-650; SER-741; SER-914; THR-916; SER-1115; SER-1117; SER-1124; SER-1133; SER-1140; SER-1144; SER-1156; SER-1159; SER-1164; THR-1168; SER-1183; SER-1275; SER-1277 AND THR-1313</scope>
    <scope>IDENTIFICATION BY MASS SPECTROMETRY [LARGE SCALE ANALYSIS]</scope>
    <source>
        <tissue>Testis</tissue>
    </source>
</reference>
<reference key="7">
    <citation type="journal article" date="2012" name="PLoS Genet.">
        <title>Phosphorylation of chromosome core components may serve as axis marks for the status of chromosomal events during mammalian meiosis.</title>
        <authorList>
            <person name="Fukuda T."/>
            <person name="Pratto F."/>
            <person name="Schimenti J.C."/>
            <person name="Turner J.M."/>
            <person name="Camerini-Otero R.D."/>
            <person name="Hoeoeg C."/>
        </authorList>
    </citation>
    <scope>SUBCELLULAR LOCATION</scope>
    <scope>PHOSPHORYLATION</scope>
</reference>
<gene>
    <name type="primary">Sycp2</name>
    <name type="synonym">Scp2</name>
</gene>
<protein>
    <recommendedName>
        <fullName>Synaptonemal complex protein 2</fullName>
        <shortName>SCP-2</shortName>
    </recommendedName>
    <alternativeName>
        <fullName>Synaptonemal complex lateral element protein</fullName>
    </alternativeName>
</protein>
<keyword id="KW-0002">3D-structure</keyword>
<keyword id="KW-0131">Cell cycle</keyword>
<keyword id="KW-0132">Cell division</keyword>
<keyword id="KW-0158">Chromosome</keyword>
<keyword id="KW-0175">Coiled coil</keyword>
<keyword id="KW-0238">DNA-binding</keyword>
<keyword id="KW-0469">Meiosis</keyword>
<keyword id="KW-0539">Nucleus</keyword>
<keyword id="KW-0597">Phosphoprotein</keyword>
<keyword id="KW-1185">Reference proteome</keyword>
<dbReference type="EMBL" id="DQ103262">
    <property type="protein sequence ID" value="AAZ80470.1"/>
    <property type="molecule type" value="mRNA"/>
</dbReference>
<dbReference type="EMBL" id="AL772217">
    <property type="status" value="NOT_ANNOTATED_CDS"/>
    <property type="molecule type" value="Genomic_DNA"/>
</dbReference>
<dbReference type="EMBL" id="AK014411">
    <property type="status" value="NOT_ANNOTATED_CDS"/>
    <property type="molecule type" value="mRNA"/>
</dbReference>
<dbReference type="CCDS" id="CCDS38370.1"/>
<dbReference type="RefSeq" id="NP_796165.2">
    <property type="nucleotide sequence ID" value="NM_177191.3"/>
</dbReference>
<dbReference type="RefSeq" id="XP_017174510.1">
    <property type="nucleotide sequence ID" value="XM_017319021.1"/>
</dbReference>
<dbReference type="PDB" id="5IWZ">
    <property type="method" value="X-ray"/>
    <property type="resolution" value="2.10 A"/>
    <property type="chains" value="A=1-390"/>
</dbReference>
<dbReference type="PDBsum" id="5IWZ"/>
<dbReference type="SMR" id="Q9CUU3"/>
<dbReference type="BioGRID" id="236115">
    <property type="interactions" value="3"/>
</dbReference>
<dbReference type="CORUM" id="Q9CUU3"/>
<dbReference type="FunCoup" id="Q9CUU3">
    <property type="interactions" value="1079"/>
</dbReference>
<dbReference type="IntAct" id="Q9CUU3">
    <property type="interactions" value="1"/>
</dbReference>
<dbReference type="MINT" id="Q9CUU3"/>
<dbReference type="STRING" id="10090.ENSMUSP00000079909"/>
<dbReference type="iPTMnet" id="Q9CUU3"/>
<dbReference type="PhosphoSitePlus" id="Q9CUU3"/>
<dbReference type="SwissPalm" id="Q9CUU3"/>
<dbReference type="PaxDb" id="10090-ENSMUSP00000079909"/>
<dbReference type="ProteomicsDB" id="254504"/>
<dbReference type="Antibodypedia" id="58383">
    <property type="antibodies" value="86 antibodies from 17 providers"/>
</dbReference>
<dbReference type="DNASU" id="320558"/>
<dbReference type="Ensembl" id="ENSMUST00000081134.10">
    <property type="protein sequence ID" value="ENSMUSP00000079909.4"/>
    <property type="gene ID" value="ENSMUSG00000060445.12"/>
</dbReference>
<dbReference type="GeneID" id="320558"/>
<dbReference type="KEGG" id="mmu:320558"/>
<dbReference type="UCSC" id="uc008ohn.1">
    <property type="organism name" value="mouse"/>
</dbReference>
<dbReference type="AGR" id="MGI:1933281"/>
<dbReference type="CTD" id="10388"/>
<dbReference type="MGI" id="MGI:1933281">
    <property type="gene designation" value="Sycp2"/>
</dbReference>
<dbReference type="VEuPathDB" id="HostDB:ENSMUSG00000060445"/>
<dbReference type="eggNOG" id="ENOG502QVM5">
    <property type="taxonomic scope" value="Eukaryota"/>
</dbReference>
<dbReference type="GeneTree" id="ENSGT00530000063859"/>
<dbReference type="HOGENOM" id="CLU_004101_0_0_1"/>
<dbReference type="InParanoid" id="Q9CUU3"/>
<dbReference type="OMA" id="MCEEFNT"/>
<dbReference type="OrthoDB" id="10256849at2759"/>
<dbReference type="PhylomeDB" id="Q9CUU3"/>
<dbReference type="TreeFam" id="TF332368"/>
<dbReference type="BioGRID-ORCS" id="320558">
    <property type="hits" value="3 hits in 79 CRISPR screens"/>
</dbReference>
<dbReference type="ChiTaRS" id="Scp2">
    <property type="organism name" value="mouse"/>
</dbReference>
<dbReference type="PRO" id="PR:Q9CUU3"/>
<dbReference type="Proteomes" id="UP000000589">
    <property type="component" value="Chromosome 2"/>
</dbReference>
<dbReference type="RNAct" id="Q9CUU3">
    <property type="molecule type" value="protein"/>
</dbReference>
<dbReference type="Bgee" id="ENSMUSG00000060445">
    <property type="expression patterns" value="Expressed in spermatocyte and 39 other cell types or tissues"/>
</dbReference>
<dbReference type="ExpressionAtlas" id="Q9CUU3">
    <property type="expression patterns" value="baseline and differential"/>
</dbReference>
<dbReference type="GO" id="GO:0000800">
    <property type="term" value="C:lateral element"/>
    <property type="evidence" value="ECO:0000314"/>
    <property type="project" value="MGI"/>
</dbReference>
<dbReference type="GO" id="GO:0005654">
    <property type="term" value="C:nucleoplasm"/>
    <property type="evidence" value="ECO:0000304"/>
    <property type="project" value="Reactome"/>
</dbReference>
<dbReference type="GO" id="GO:0000795">
    <property type="term" value="C:synaptonemal complex"/>
    <property type="evidence" value="ECO:0000314"/>
    <property type="project" value="MGI"/>
</dbReference>
<dbReference type="GO" id="GO:0003677">
    <property type="term" value="F:DNA binding"/>
    <property type="evidence" value="ECO:0007669"/>
    <property type="project" value="UniProtKB-KW"/>
</dbReference>
<dbReference type="GO" id="GO:0009887">
    <property type="term" value="P:animal organ morphogenesis"/>
    <property type="evidence" value="ECO:0000315"/>
    <property type="project" value="MGI"/>
</dbReference>
<dbReference type="GO" id="GO:0006915">
    <property type="term" value="P:apoptotic process"/>
    <property type="evidence" value="ECO:0000315"/>
    <property type="project" value="MGI"/>
</dbReference>
<dbReference type="GO" id="GO:0051301">
    <property type="term" value="P:cell division"/>
    <property type="evidence" value="ECO:0007669"/>
    <property type="project" value="UniProtKB-KW"/>
</dbReference>
<dbReference type="GO" id="GO:0035234">
    <property type="term" value="P:ectopic germ cell programmed cell death"/>
    <property type="evidence" value="ECO:0000315"/>
    <property type="project" value="MGI"/>
</dbReference>
<dbReference type="GO" id="GO:0007143">
    <property type="term" value="P:female meiotic nuclear division"/>
    <property type="evidence" value="ECO:0000315"/>
    <property type="project" value="MGI"/>
</dbReference>
<dbReference type="GO" id="GO:0009566">
    <property type="term" value="P:fertilization"/>
    <property type="evidence" value="ECO:0000315"/>
    <property type="project" value="MGI"/>
</dbReference>
<dbReference type="GO" id="GO:0048808">
    <property type="term" value="P:male genitalia morphogenesis"/>
    <property type="evidence" value="ECO:0000315"/>
    <property type="project" value="MGI"/>
</dbReference>
<dbReference type="GO" id="GO:0007140">
    <property type="term" value="P:male meiotic nuclear division"/>
    <property type="evidence" value="ECO:0000315"/>
    <property type="project" value="MGI"/>
</dbReference>
<dbReference type="GO" id="GO:0043066">
    <property type="term" value="P:negative regulation of apoptotic process"/>
    <property type="evidence" value="ECO:0000315"/>
    <property type="project" value="MGI"/>
</dbReference>
<dbReference type="GO" id="GO:0051093">
    <property type="term" value="P:negative regulation of developmental process"/>
    <property type="evidence" value="ECO:0000315"/>
    <property type="project" value="MGI"/>
</dbReference>
<dbReference type="GO" id="GO:2000242">
    <property type="term" value="P:negative regulation of reproductive process"/>
    <property type="evidence" value="ECO:0000315"/>
    <property type="project" value="MGI"/>
</dbReference>
<dbReference type="InterPro" id="IPR024835">
    <property type="entry name" value="SYCP2-like"/>
</dbReference>
<dbReference type="InterPro" id="IPR041322">
    <property type="entry name" value="SYCP2_ARLD"/>
</dbReference>
<dbReference type="InterPro" id="IPR040560">
    <property type="entry name" value="SYCP2_SLD"/>
</dbReference>
<dbReference type="PANTHER" id="PTHR15607:SF12">
    <property type="entry name" value="SYNAPTONEMAL COMPLEX PROTEIN 2"/>
    <property type="match status" value="1"/>
</dbReference>
<dbReference type="PANTHER" id="PTHR15607">
    <property type="entry name" value="SYNAPTONEMAL COMPLEX PROTEIN-RELATED"/>
    <property type="match status" value="1"/>
</dbReference>
<dbReference type="Pfam" id="PF18581">
    <property type="entry name" value="SYCP2_ARLD"/>
    <property type="match status" value="1"/>
</dbReference>
<dbReference type="Pfam" id="PF18584">
    <property type="entry name" value="SYCP2_SLD"/>
    <property type="match status" value="1"/>
</dbReference>
<comment type="function">
    <text evidence="4 5">Major component of the axial/lateral elements of synaptonemal complexes (SCS) during meiotic prophase. Plays a role in the assembly of synaptonemal complexes (PubMed:16717126). Required for normal meiotic chromosome synapsis during oocyte and spermatocyte development and for normal male and female fertility (PubMed:16717126). Required for insertion of SYCP3 into synaptonemal complexes (PubMed:16717126). May be involved in the organization of chromatin by temporarily binding to DNA scaffold attachment regions. Requires SYCP3, but not SYCP1, in order to be incorporated into the axial/lateral elements.</text>
</comment>
<comment type="subunit">
    <text evidence="1 5 6">Component of the lateral elements of synaptonemal complexes (PubMed:16717126). Heterodimer with SYCP3 (PubMed:16717126). Interacts with SMC1A and SMC3 (By similarity). Interacts with TEX11 (PubMed:18316482).</text>
</comment>
<comment type="subcellular location">
    <subcellularLocation>
        <location evidence="5">Nucleus</location>
    </subcellularLocation>
    <subcellularLocation>
        <location evidence="5 7">Chromosome</location>
    </subcellularLocation>
    <text evidence="5">In axial/lateral elements of the tripartite segments of synaptonemal complexes.</text>
</comment>
<comment type="tissue specificity">
    <text evidence="5">Detected in testis and spermatocytes (at protein level).</text>
</comment>
<comment type="PTM">
    <text evidence="7">Phosphorylated.</text>
</comment>
<comment type="disruption phenotype">
    <text evidence="5">Mice appear healthy, but males are completely sterile, due to defective meiotic chromosome synapsis during spermatocyte development. Testes weight is much reduced in mutant mice. Females display reduced fertility.</text>
</comment>
<comment type="similarity">
    <text evidence="8">Belongs to the SYCP2 family.</text>
</comment>
<comment type="sequence caution" evidence="8">
    <conflict type="miscellaneous discrepancy">
        <sequence resource="EMBL" id="AK014411"/>
    </conflict>
    <text>Intron retention.</text>
</comment>
<organism>
    <name type="scientific">Mus musculus</name>
    <name type="common">Mouse</name>
    <dbReference type="NCBI Taxonomy" id="10090"/>
    <lineage>
        <taxon>Eukaryota</taxon>
        <taxon>Metazoa</taxon>
        <taxon>Chordata</taxon>
        <taxon>Craniata</taxon>
        <taxon>Vertebrata</taxon>
        <taxon>Euteleostomi</taxon>
        <taxon>Mammalia</taxon>
        <taxon>Eutheria</taxon>
        <taxon>Euarchontoglires</taxon>
        <taxon>Glires</taxon>
        <taxon>Rodentia</taxon>
        <taxon>Myomorpha</taxon>
        <taxon>Muroidea</taxon>
        <taxon>Muridae</taxon>
        <taxon>Murinae</taxon>
        <taxon>Mus</taxon>
        <taxon>Mus</taxon>
    </lineage>
</organism>